<gene>
    <name evidence="1" type="primary">kefB</name>
    <name type="ordered locus">SeAg_B3654</name>
</gene>
<keyword id="KW-0050">Antiport</keyword>
<keyword id="KW-0997">Cell inner membrane</keyword>
<keyword id="KW-1003">Cell membrane</keyword>
<keyword id="KW-0406">Ion transport</keyword>
<keyword id="KW-0472">Membrane</keyword>
<keyword id="KW-0630">Potassium</keyword>
<keyword id="KW-0633">Potassium transport</keyword>
<keyword id="KW-0812">Transmembrane</keyword>
<keyword id="KW-1133">Transmembrane helix</keyword>
<keyword id="KW-0813">Transport</keyword>
<reference key="1">
    <citation type="journal article" date="2011" name="J. Bacteriol.">
        <title>Comparative genomics of 28 Salmonella enterica isolates: evidence for CRISPR-mediated adaptive sublineage evolution.</title>
        <authorList>
            <person name="Fricke W.F."/>
            <person name="Mammel M.K."/>
            <person name="McDermott P.F."/>
            <person name="Tartera C."/>
            <person name="White D.G."/>
            <person name="Leclerc J.E."/>
            <person name="Ravel J."/>
            <person name="Cebula T.A."/>
        </authorList>
    </citation>
    <scope>NUCLEOTIDE SEQUENCE [LARGE SCALE GENOMIC DNA]</scope>
    <source>
        <strain>SL483</strain>
    </source>
</reference>
<evidence type="ECO:0000255" key="1">
    <source>
        <dbReference type="HAMAP-Rule" id="MF_01412"/>
    </source>
</evidence>
<evidence type="ECO:0000255" key="2">
    <source>
        <dbReference type="PROSITE-ProRule" id="PRU00543"/>
    </source>
</evidence>
<name>KEFB_SALA4</name>
<comment type="function">
    <text evidence="1">Pore-forming subunit of a potassium efflux system that confers protection against electrophiles. Catalyzes K(+)/H(+) antiport.</text>
</comment>
<comment type="subunit">
    <text evidence="1">Interacts with the regulatory subunit KefG.</text>
</comment>
<comment type="subcellular location">
    <subcellularLocation>
        <location evidence="1">Cell inner membrane</location>
        <topology evidence="1">Multi-pass membrane protein</topology>
    </subcellularLocation>
</comment>
<comment type="similarity">
    <text evidence="1">Belongs to the monovalent cation:proton antiporter 2 (CPA2) transporter (TC 2.A.37) family. KefB subfamily.</text>
</comment>
<accession>B5F8G9</accession>
<feature type="chain" id="PRO_1000145525" description="Glutathione-regulated potassium-efflux system protein KefB">
    <location>
        <begin position="1"/>
        <end position="601"/>
    </location>
</feature>
<feature type="transmembrane region" description="Helical" evidence="1">
    <location>
        <begin position="4"/>
        <end position="24"/>
    </location>
</feature>
<feature type="transmembrane region" description="Helical" evidence="1">
    <location>
        <begin position="29"/>
        <end position="49"/>
    </location>
</feature>
<feature type="transmembrane region" description="Helical" evidence="1">
    <location>
        <begin position="55"/>
        <end position="75"/>
    </location>
</feature>
<feature type="transmembrane region" description="Helical" evidence="1">
    <location>
        <begin position="87"/>
        <end position="107"/>
    </location>
</feature>
<feature type="transmembrane region" description="Helical" evidence="1">
    <location>
        <begin position="111"/>
        <end position="131"/>
    </location>
</feature>
<feature type="transmembrane region" description="Helical" evidence="1">
    <location>
        <begin position="152"/>
        <end position="172"/>
    </location>
</feature>
<feature type="transmembrane region" description="Helical" evidence="1">
    <location>
        <begin position="177"/>
        <end position="197"/>
    </location>
</feature>
<feature type="transmembrane region" description="Helical" evidence="1">
    <location>
        <begin position="207"/>
        <end position="227"/>
    </location>
</feature>
<feature type="transmembrane region" description="Helical" evidence="1">
    <location>
        <begin position="230"/>
        <end position="250"/>
    </location>
</feature>
<feature type="transmembrane region" description="Helical" evidence="1">
    <location>
        <begin position="262"/>
        <end position="282"/>
    </location>
</feature>
<feature type="transmembrane region" description="Helical" evidence="1">
    <location>
        <begin position="284"/>
        <end position="304"/>
    </location>
</feature>
<feature type="transmembrane region" description="Helical" evidence="1">
    <location>
        <begin position="324"/>
        <end position="344"/>
    </location>
</feature>
<feature type="transmembrane region" description="Helical" evidence="1">
    <location>
        <begin position="356"/>
        <end position="376"/>
    </location>
</feature>
<feature type="domain" description="RCK N-terminal" evidence="2">
    <location>
        <begin position="400"/>
        <end position="519"/>
    </location>
</feature>
<organism>
    <name type="scientific">Salmonella agona (strain SL483)</name>
    <dbReference type="NCBI Taxonomy" id="454166"/>
    <lineage>
        <taxon>Bacteria</taxon>
        <taxon>Pseudomonadati</taxon>
        <taxon>Pseudomonadota</taxon>
        <taxon>Gammaproteobacteria</taxon>
        <taxon>Enterobacterales</taxon>
        <taxon>Enterobacteriaceae</taxon>
        <taxon>Salmonella</taxon>
    </lineage>
</organism>
<proteinExistence type="inferred from homology"/>
<dbReference type="EMBL" id="CP001138">
    <property type="protein sequence ID" value="ACH48476.1"/>
    <property type="molecule type" value="Genomic_DNA"/>
</dbReference>
<dbReference type="RefSeq" id="WP_000398133.1">
    <property type="nucleotide sequence ID" value="NC_011149.1"/>
</dbReference>
<dbReference type="SMR" id="B5F8G9"/>
<dbReference type="KEGG" id="sea:SeAg_B3654"/>
<dbReference type="HOGENOM" id="CLU_005126_9_3_6"/>
<dbReference type="Proteomes" id="UP000008819">
    <property type="component" value="Chromosome"/>
</dbReference>
<dbReference type="GO" id="GO:0005886">
    <property type="term" value="C:plasma membrane"/>
    <property type="evidence" value="ECO:0007669"/>
    <property type="project" value="UniProtKB-SubCell"/>
</dbReference>
<dbReference type="GO" id="GO:0015503">
    <property type="term" value="F:glutathione-regulated potassium exporter activity"/>
    <property type="evidence" value="ECO:0007669"/>
    <property type="project" value="UniProtKB-UniRule"/>
</dbReference>
<dbReference type="GO" id="GO:1902600">
    <property type="term" value="P:proton transmembrane transport"/>
    <property type="evidence" value="ECO:0007669"/>
    <property type="project" value="InterPro"/>
</dbReference>
<dbReference type="FunFam" id="1.20.1530.20:FF:000001">
    <property type="entry name" value="Glutathione-regulated potassium-efflux system protein KefB"/>
    <property type="match status" value="1"/>
</dbReference>
<dbReference type="FunFam" id="3.40.50.720:FF:000036">
    <property type="entry name" value="Glutathione-regulated potassium-efflux system protein KefB"/>
    <property type="match status" value="1"/>
</dbReference>
<dbReference type="Gene3D" id="1.20.1530.20">
    <property type="match status" value="1"/>
</dbReference>
<dbReference type="Gene3D" id="3.40.50.720">
    <property type="entry name" value="NAD(P)-binding Rossmann-like Domain"/>
    <property type="match status" value="1"/>
</dbReference>
<dbReference type="HAMAP" id="MF_01412">
    <property type="entry name" value="K_H_efflux_KefB"/>
    <property type="match status" value="1"/>
</dbReference>
<dbReference type="InterPro" id="IPR006153">
    <property type="entry name" value="Cation/H_exchanger_TM"/>
</dbReference>
<dbReference type="InterPro" id="IPR004771">
    <property type="entry name" value="K/H_exchanger"/>
</dbReference>
<dbReference type="InterPro" id="IPR020884">
    <property type="entry name" value="K_H_efflux_KefB"/>
</dbReference>
<dbReference type="InterPro" id="IPR006036">
    <property type="entry name" value="K_uptake_TrkA"/>
</dbReference>
<dbReference type="InterPro" id="IPR038770">
    <property type="entry name" value="Na+/solute_symporter_sf"/>
</dbReference>
<dbReference type="InterPro" id="IPR036291">
    <property type="entry name" value="NAD(P)-bd_dom_sf"/>
</dbReference>
<dbReference type="InterPro" id="IPR003148">
    <property type="entry name" value="RCK_N"/>
</dbReference>
<dbReference type="NCBIfam" id="TIGR00932">
    <property type="entry name" value="2a37"/>
    <property type="match status" value="1"/>
</dbReference>
<dbReference type="NCBIfam" id="NF002973">
    <property type="entry name" value="PRK03659.1"/>
    <property type="match status" value="1"/>
</dbReference>
<dbReference type="PANTHER" id="PTHR46157">
    <property type="entry name" value="K(+) EFFLUX ANTIPORTER 3, CHLOROPLASTIC"/>
    <property type="match status" value="1"/>
</dbReference>
<dbReference type="PANTHER" id="PTHR46157:SF4">
    <property type="entry name" value="K(+) EFFLUX ANTIPORTER 3, CHLOROPLASTIC"/>
    <property type="match status" value="1"/>
</dbReference>
<dbReference type="Pfam" id="PF00999">
    <property type="entry name" value="Na_H_Exchanger"/>
    <property type="match status" value="1"/>
</dbReference>
<dbReference type="Pfam" id="PF02254">
    <property type="entry name" value="TrkA_N"/>
    <property type="match status" value="1"/>
</dbReference>
<dbReference type="PRINTS" id="PR00335">
    <property type="entry name" value="KUPTAKETRKA"/>
</dbReference>
<dbReference type="SUPFAM" id="SSF51735">
    <property type="entry name" value="NAD(P)-binding Rossmann-fold domains"/>
    <property type="match status" value="1"/>
</dbReference>
<dbReference type="PROSITE" id="PS51201">
    <property type="entry name" value="RCK_N"/>
    <property type="match status" value="1"/>
</dbReference>
<sequence>MEGADLLTAGVLFLFAAVAAVPLAARLGIGAVLGYLLAGIAIGPWGLGFISDVDEILHFSELGVVFLMFIIGLELNPSRLWQLRRSIFGVGAAQVLLSAAVLAGLLMLADFLWQAAVVGGIGLAMSSTAMALQLMREKGMNRSESGQLGFSVLLFQDLAVIPALALVPLLAGSADEHFDWFKVAMKVLAFAVMLIGGRYLLRPVFRFIAASGVREVFTAATLLLVLSAALFMDALGLSMALGTFIAGVLLAESEYRHELENAIDPFKGLLLGLFFISVGMSLNLGVLYTHLLWVAASVVILVVIKMLTLYLLARLYGIRSSERMQFASVLSQGGEFAFVLFSTASSQRLFQGDQMALLLVTVTLSMMTTPLLMKGIDKWLSRRLNGPEENDEKPWVEDDKPQVIVVGFGRFGQVIARLLMANKMRITVLERDIGAVNLMRKYGYKVYYGDATQVELLRSAGAEAAESIVITCNEPEDTMKLVALCQQHFPHLHILARARGRVEAHELLQAGVTQFSRETFSSALELGRKTLVSLGMHPHQAQRAQLHFRRLDMRMLRELIPEHSDMVQISRAREARRELEEIFQREMQQERRQLDGWDEFE</sequence>
<protein>
    <recommendedName>
        <fullName evidence="1">Glutathione-regulated potassium-efflux system protein KefB</fullName>
    </recommendedName>
    <alternativeName>
        <fullName evidence="1">K(+)/H(+) antiporter</fullName>
    </alternativeName>
</protein>